<sequence length="634" mass="72272">MINIRFPDGSIREFEAGVNSLDVAKSISPSLAKATVAAYIDDQLKDAKDAINSNCELRLITVKDPEGLEILRHSCAHLLAHAVKELYPSTEVTIGPVVDNGFYYDFSFKESIGEADLPTIEKKMKELAKKSAPVSYRVVPKAEAIEFFKAQGENYKVEIIDSIADEQVKIYTQDNFSDLCRGPHIPNTSVLKAFKLTKLAGAYWRGNSDNEMLTRIYGTCWATKEDLEQYLNMLEEAEKRDHRKIGKVLDLFHFQEDSPGIAFWHDNGVRIWRQVEDYMRASNNKYGCSEIRTPLIADFSLWQKSGHASKYAENMFATKSENRDFAIRPMNCPTCVQVYNTKLHSYRDLPIRMAEFGIVHRNEPSGSLHGLLRVRSFTQDDGHIFCTPEQVEEEVILMVQQCFEVYKDFGFNDFAVKIALRPENRIGDDETWDKSEQMLKNALDANNVSYELLPGEGAFYGPKIEFHLKDAIGRSWQCGTIQLDFSMPQRLGATYIDKNGEKQVPVMLHRAIVGSLERFIGMLIEHYAGNLPLWLAPVQVAVMGISNNQDDYCKEVFTMLEKNGIRAKLDLRNEKIGFKIREHTLLRVPYLVILGKNEQEQKIITIRKHSGEDLGQMSVDDFCAFLDKQIQAKE</sequence>
<name>SYT_FRATN</name>
<proteinExistence type="inferred from homology"/>
<comment type="function">
    <text evidence="1">Catalyzes the attachment of threonine to tRNA(Thr) in a two-step reaction: L-threonine is first activated by ATP to form Thr-AMP and then transferred to the acceptor end of tRNA(Thr). Also edits incorrectly charged L-seryl-tRNA(Thr).</text>
</comment>
<comment type="catalytic activity">
    <reaction evidence="1">
        <text>tRNA(Thr) + L-threonine + ATP = L-threonyl-tRNA(Thr) + AMP + diphosphate + H(+)</text>
        <dbReference type="Rhea" id="RHEA:24624"/>
        <dbReference type="Rhea" id="RHEA-COMP:9670"/>
        <dbReference type="Rhea" id="RHEA-COMP:9704"/>
        <dbReference type="ChEBI" id="CHEBI:15378"/>
        <dbReference type="ChEBI" id="CHEBI:30616"/>
        <dbReference type="ChEBI" id="CHEBI:33019"/>
        <dbReference type="ChEBI" id="CHEBI:57926"/>
        <dbReference type="ChEBI" id="CHEBI:78442"/>
        <dbReference type="ChEBI" id="CHEBI:78534"/>
        <dbReference type="ChEBI" id="CHEBI:456215"/>
        <dbReference type="EC" id="6.1.1.3"/>
    </reaction>
</comment>
<comment type="cofactor">
    <cofactor evidence="1">
        <name>Zn(2+)</name>
        <dbReference type="ChEBI" id="CHEBI:29105"/>
    </cofactor>
    <text evidence="1">Binds 1 zinc ion per subunit.</text>
</comment>
<comment type="subunit">
    <text evidence="1">Homodimer.</text>
</comment>
<comment type="subcellular location">
    <subcellularLocation>
        <location evidence="1">Cytoplasm</location>
    </subcellularLocation>
</comment>
<comment type="similarity">
    <text evidence="1">Belongs to the class-II aminoacyl-tRNA synthetase family.</text>
</comment>
<organism>
    <name type="scientific">Francisella tularensis subsp. novicida (strain U112)</name>
    <dbReference type="NCBI Taxonomy" id="401614"/>
    <lineage>
        <taxon>Bacteria</taxon>
        <taxon>Pseudomonadati</taxon>
        <taxon>Pseudomonadota</taxon>
        <taxon>Gammaproteobacteria</taxon>
        <taxon>Thiotrichales</taxon>
        <taxon>Francisellaceae</taxon>
        <taxon>Francisella</taxon>
    </lineage>
</organism>
<accession>A0Q762</accession>
<reference key="1">
    <citation type="journal article" date="2007" name="Genome Biol.">
        <title>Comparison of Francisella tularensis genomes reveals evolutionary events associated with the emergence of human pathogenic strains.</title>
        <authorList>
            <person name="Rohmer L."/>
            <person name="Fong C."/>
            <person name="Abmayr S."/>
            <person name="Wasnick M."/>
            <person name="Larson Freeman T.J."/>
            <person name="Radey M."/>
            <person name="Guina T."/>
            <person name="Svensson K."/>
            <person name="Hayden H.S."/>
            <person name="Jacobs M."/>
            <person name="Gallagher L.A."/>
            <person name="Manoil C."/>
            <person name="Ernst R.K."/>
            <person name="Drees B."/>
            <person name="Buckley D."/>
            <person name="Haugen E."/>
            <person name="Bovee D."/>
            <person name="Zhou Y."/>
            <person name="Chang J."/>
            <person name="Levy R."/>
            <person name="Lim R."/>
            <person name="Gillett W."/>
            <person name="Guenthener D."/>
            <person name="Kang A."/>
            <person name="Shaffer S.A."/>
            <person name="Taylor G."/>
            <person name="Chen J."/>
            <person name="Gallis B."/>
            <person name="D'Argenio D.A."/>
            <person name="Forsman M."/>
            <person name="Olson M.V."/>
            <person name="Goodlett D.R."/>
            <person name="Kaul R."/>
            <person name="Miller S.I."/>
            <person name="Brittnacher M.J."/>
        </authorList>
    </citation>
    <scope>NUCLEOTIDE SEQUENCE [LARGE SCALE GENOMIC DNA]</scope>
    <source>
        <strain>U112</strain>
    </source>
</reference>
<protein>
    <recommendedName>
        <fullName evidence="1">Threonine--tRNA ligase</fullName>
        <ecNumber evidence="1">6.1.1.3</ecNumber>
    </recommendedName>
    <alternativeName>
        <fullName evidence="1">Threonyl-tRNA synthetase</fullName>
        <shortName evidence="1">ThrRS</shortName>
    </alternativeName>
</protein>
<feature type="chain" id="PRO_1000020393" description="Threonine--tRNA ligase">
    <location>
        <begin position="1"/>
        <end position="634"/>
    </location>
</feature>
<feature type="domain" description="TGS" evidence="2">
    <location>
        <begin position="1"/>
        <end position="61"/>
    </location>
</feature>
<feature type="region of interest" description="Catalytic" evidence="1">
    <location>
        <begin position="241"/>
        <end position="532"/>
    </location>
</feature>
<feature type="binding site" evidence="1">
    <location>
        <position position="332"/>
    </location>
    <ligand>
        <name>Zn(2+)</name>
        <dbReference type="ChEBI" id="CHEBI:29105"/>
    </ligand>
</feature>
<feature type="binding site" evidence="1">
    <location>
        <position position="383"/>
    </location>
    <ligand>
        <name>Zn(2+)</name>
        <dbReference type="ChEBI" id="CHEBI:29105"/>
    </ligand>
</feature>
<feature type="binding site" evidence="1">
    <location>
        <position position="509"/>
    </location>
    <ligand>
        <name>Zn(2+)</name>
        <dbReference type="ChEBI" id="CHEBI:29105"/>
    </ligand>
</feature>
<dbReference type="EC" id="6.1.1.3" evidence="1"/>
<dbReference type="EMBL" id="CP000439">
    <property type="protein sequence ID" value="ABK90077.1"/>
    <property type="molecule type" value="Genomic_DNA"/>
</dbReference>
<dbReference type="RefSeq" id="WP_003039890.1">
    <property type="nucleotide sequence ID" value="NZ_CP009633.1"/>
</dbReference>
<dbReference type="SMR" id="A0Q762"/>
<dbReference type="KEGG" id="ftn:FTN_1191"/>
<dbReference type="KEGG" id="ftx:AW25_816"/>
<dbReference type="BioCyc" id="FTUL401614:G1G75-1234-MONOMER"/>
<dbReference type="Proteomes" id="UP000000762">
    <property type="component" value="Chromosome"/>
</dbReference>
<dbReference type="GO" id="GO:0005737">
    <property type="term" value="C:cytoplasm"/>
    <property type="evidence" value="ECO:0007669"/>
    <property type="project" value="UniProtKB-SubCell"/>
</dbReference>
<dbReference type="GO" id="GO:0005524">
    <property type="term" value="F:ATP binding"/>
    <property type="evidence" value="ECO:0007669"/>
    <property type="project" value="UniProtKB-UniRule"/>
</dbReference>
<dbReference type="GO" id="GO:0046872">
    <property type="term" value="F:metal ion binding"/>
    <property type="evidence" value="ECO:0007669"/>
    <property type="project" value="UniProtKB-KW"/>
</dbReference>
<dbReference type="GO" id="GO:0004829">
    <property type="term" value="F:threonine-tRNA ligase activity"/>
    <property type="evidence" value="ECO:0007669"/>
    <property type="project" value="UniProtKB-UniRule"/>
</dbReference>
<dbReference type="GO" id="GO:0000049">
    <property type="term" value="F:tRNA binding"/>
    <property type="evidence" value="ECO:0007669"/>
    <property type="project" value="UniProtKB-KW"/>
</dbReference>
<dbReference type="GO" id="GO:0006435">
    <property type="term" value="P:threonyl-tRNA aminoacylation"/>
    <property type="evidence" value="ECO:0007669"/>
    <property type="project" value="UniProtKB-UniRule"/>
</dbReference>
<dbReference type="CDD" id="cd01667">
    <property type="entry name" value="TGS_ThrRS"/>
    <property type="match status" value="1"/>
</dbReference>
<dbReference type="CDD" id="cd00860">
    <property type="entry name" value="ThrRS_anticodon"/>
    <property type="match status" value="1"/>
</dbReference>
<dbReference type="CDD" id="cd00771">
    <property type="entry name" value="ThrRS_core"/>
    <property type="match status" value="1"/>
</dbReference>
<dbReference type="FunFam" id="3.10.20.30:FF:000005">
    <property type="entry name" value="Threonine--tRNA ligase"/>
    <property type="match status" value="1"/>
</dbReference>
<dbReference type="FunFam" id="3.30.54.20:FF:000002">
    <property type="entry name" value="Threonine--tRNA ligase"/>
    <property type="match status" value="1"/>
</dbReference>
<dbReference type="FunFam" id="3.30.930.10:FF:000002">
    <property type="entry name" value="Threonine--tRNA ligase"/>
    <property type="match status" value="1"/>
</dbReference>
<dbReference type="FunFam" id="3.40.50.800:FF:000001">
    <property type="entry name" value="Threonine--tRNA ligase"/>
    <property type="match status" value="1"/>
</dbReference>
<dbReference type="FunFam" id="3.30.980.10:FF:000005">
    <property type="entry name" value="Threonyl-tRNA synthetase, mitochondrial"/>
    <property type="match status" value="1"/>
</dbReference>
<dbReference type="Gene3D" id="3.10.20.30">
    <property type="match status" value="1"/>
</dbReference>
<dbReference type="Gene3D" id="3.30.54.20">
    <property type="match status" value="1"/>
</dbReference>
<dbReference type="Gene3D" id="3.40.50.800">
    <property type="entry name" value="Anticodon-binding domain"/>
    <property type="match status" value="1"/>
</dbReference>
<dbReference type="Gene3D" id="3.30.930.10">
    <property type="entry name" value="Bira Bifunctional Protein, Domain 2"/>
    <property type="match status" value="1"/>
</dbReference>
<dbReference type="Gene3D" id="3.30.980.10">
    <property type="entry name" value="Threonyl-trna Synthetase, Chain A, domain 2"/>
    <property type="match status" value="1"/>
</dbReference>
<dbReference type="HAMAP" id="MF_00184">
    <property type="entry name" value="Thr_tRNA_synth"/>
    <property type="match status" value="1"/>
</dbReference>
<dbReference type="InterPro" id="IPR002314">
    <property type="entry name" value="aa-tRNA-synt_IIb"/>
</dbReference>
<dbReference type="InterPro" id="IPR006195">
    <property type="entry name" value="aa-tRNA-synth_II"/>
</dbReference>
<dbReference type="InterPro" id="IPR045864">
    <property type="entry name" value="aa-tRNA-synth_II/BPL/LPL"/>
</dbReference>
<dbReference type="InterPro" id="IPR004154">
    <property type="entry name" value="Anticodon-bd"/>
</dbReference>
<dbReference type="InterPro" id="IPR036621">
    <property type="entry name" value="Anticodon-bd_dom_sf"/>
</dbReference>
<dbReference type="InterPro" id="IPR012675">
    <property type="entry name" value="Beta-grasp_dom_sf"/>
</dbReference>
<dbReference type="InterPro" id="IPR004095">
    <property type="entry name" value="TGS"/>
</dbReference>
<dbReference type="InterPro" id="IPR012676">
    <property type="entry name" value="TGS-like"/>
</dbReference>
<dbReference type="InterPro" id="IPR002320">
    <property type="entry name" value="Thr-tRNA-ligase_IIa"/>
</dbReference>
<dbReference type="InterPro" id="IPR018163">
    <property type="entry name" value="Thr/Ala-tRNA-synth_IIc_edit"/>
</dbReference>
<dbReference type="InterPro" id="IPR047246">
    <property type="entry name" value="ThrRS_anticodon"/>
</dbReference>
<dbReference type="InterPro" id="IPR033728">
    <property type="entry name" value="ThrRS_core"/>
</dbReference>
<dbReference type="InterPro" id="IPR012947">
    <property type="entry name" value="tRNA_SAD"/>
</dbReference>
<dbReference type="NCBIfam" id="TIGR00418">
    <property type="entry name" value="thrS"/>
    <property type="match status" value="1"/>
</dbReference>
<dbReference type="PANTHER" id="PTHR11451:SF44">
    <property type="entry name" value="THREONINE--TRNA LIGASE, CHLOROPLASTIC_MITOCHONDRIAL 2"/>
    <property type="match status" value="1"/>
</dbReference>
<dbReference type="PANTHER" id="PTHR11451">
    <property type="entry name" value="THREONINE-TRNA LIGASE"/>
    <property type="match status" value="1"/>
</dbReference>
<dbReference type="Pfam" id="PF03129">
    <property type="entry name" value="HGTP_anticodon"/>
    <property type="match status" value="1"/>
</dbReference>
<dbReference type="Pfam" id="PF02824">
    <property type="entry name" value="TGS"/>
    <property type="match status" value="1"/>
</dbReference>
<dbReference type="Pfam" id="PF00587">
    <property type="entry name" value="tRNA-synt_2b"/>
    <property type="match status" value="1"/>
</dbReference>
<dbReference type="Pfam" id="PF07973">
    <property type="entry name" value="tRNA_SAD"/>
    <property type="match status" value="1"/>
</dbReference>
<dbReference type="PRINTS" id="PR01047">
    <property type="entry name" value="TRNASYNTHTHR"/>
</dbReference>
<dbReference type="SMART" id="SM00863">
    <property type="entry name" value="tRNA_SAD"/>
    <property type="match status" value="1"/>
</dbReference>
<dbReference type="SUPFAM" id="SSF52954">
    <property type="entry name" value="Class II aaRS ABD-related"/>
    <property type="match status" value="1"/>
</dbReference>
<dbReference type="SUPFAM" id="SSF55681">
    <property type="entry name" value="Class II aaRS and biotin synthetases"/>
    <property type="match status" value="1"/>
</dbReference>
<dbReference type="SUPFAM" id="SSF81271">
    <property type="entry name" value="TGS-like"/>
    <property type="match status" value="1"/>
</dbReference>
<dbReference type="SUPFAM" id="SSF55186">
    <property type="entry name" value="ThrRS/AlaRS common domain"/>
    <property type="match status" value="1"/>
</dbReference>
<dbReference type="PROSITE" id="PS50862">
    <property type="entry name" value="AA_TRNA_LIGASE_II"/>
    <property type="match status" value="1"/>
</dbReference>
<dbReference type="PROSITE" id="PS51880">
    <property type="entry name" value="TGS"/>
    <property type="match status" value="1"/>
</dbReference>
<keyword id="KW-0030">Aminoacyl-tRNA synthetase</keyword>
<keyword id="KW-0067">ATP-binding</keyword>
<keyword id="KW-0963">Cytoplasm</keyword>
<keyword id="KW-0436">Ligase</keyword>
<keyword id="KW-0479">Metal-binding</keyword>
<keyword id="KW-0547">Nucleotide-binding</keyword>
<keyword id="KW-0648">Protein biosynthesis</keyword>
<keyword id="KW-0694">RNA-binding</keyword>
<keyword id="KW-0820">tRNA-binding</keyword>
<keyword id="KW-0862">Zinc</keyword>
<gene>
    <name evidence="1" type="primary">thrS</name>
    <name type="ordered locus">FTN_1191</name>
</gene>
<evidence type="ECO:0000255" key="1">
    <source>
        <dbReference type="HAMAP-Rule" id="MF_00184"/>
    </source>
</evidence>
<evidence type="ECO:0000255" key="2">
    <source>
        <dbReference type="PROSITE-ProRule" id="PRU01228"/>
    </source>
</evidence>